<dbReference type="EC" id="3.1.4.52" evidence="3"/>
<dbReference type="EMBL" id="U00039">
    <property type="protein sequence ID" value="AAB18502.1"/>
    <property type="status" value="ALT_FRAME"/>
    <property type="molecule type" value="Genomic_DNA"/>
</dbReference>
<dbReference type="EMBL" id="U00096">
    <property type="protein sequence ID" value="AAC76550.2"/>
    <property type="molecule type" value="Genomic_DNA"/>
</dbReference>
<dbReference type="EMBL" id="AP009048">
    <property type="protein sequence ID" value="BAE77769.1"/>
    <property type="molecule type" value="Genomic_DNA"/>
</dbReference>
<dbReference type="PIR" id="H65150">
    <property type="entry name" value="H65150"/>
</dbReference>
<dbReference type="RefSeq" id="NP_417982.2">
    <property type="nucleotide sequence ID" value="NC_000913.3"/>
</dbReference>
<dbReference type="RefSeq" id="WP_001295219.1">
    <property type="nucleotide sequence ID" value="NZ_SSZK01000039.1"/>
</dbReference>
<dbReference type="SMR" id="P37646"/>
<dbReference type="BioGRID" id="4262527">
    <property type="interactions" value="14"/>
</dbReference>
<dbReference type="FunCoup" id="P37646">
    <property type="interactions" value="20"/>
</dbReference>
<dbReference type="IntAct" id="P37646">
    <property type="interactions" value="2"/>
</dbReference>
<dbReference type="STRING" id="511145.b3525"/>
<dbReference type="PaxDb" id="511145-b3525"/>
<dbReference type="EnsemblBacteria" id="AAC76550">
    <property type="protein sequence ID" value="AAC76550"/>
    <property type="gene ID" value="b3525"/>
</dbReference>
<dbReference type="GeneID" id="75201973"/>
<dbReference type="GeneID" id="948042"/>
<dbReference type="KEGG" id="ecj:JW3493"/>
<dbReference type="KEGG" id="eco:b3525"/>
<dbReference type="KEGG" id="ecoc:C3026_19095"/>
<dbReference type="PATRIC" id="fig|511145.12.peg.3634"/>
<dbReference type="EchoBASE" id="EB2162"/>
<dbReference type="eggNOG" id="COG2200">
    <property type="taxonomic scope" value="Bacteria"/>
</dbReference>
<dbReference type="HOGENOM" id="CLU_089254_0_0_6"/>
<dbReference type="InParanoid" id="P37646"/>
<dbReference type="OMA" id="CGMANFS"/>
<dbReference type="OrthoDB" id="6473901at2"/>
<dbReference type="PhylomeDB" id="P37646"/>
<dbReference type="BioCyc" id="EcoCyc:EG12252-MONOMER"/>
<dbReference type="BioCyc" id="MetaCyc:EG12252-MONOMER"/>
<dbReference type="PRO" id="PR:P37646"/>
<dbReference type="Proteomes" id="UP000000625">
    <property type="component" value="Chromosome"/>
</dbReference>
<dbReference type="GO" id="GO:0005886">
    <property type="term" value="C:plasma membrane"/>
    <property type="evidence" value="ECO:0000318"/>
    <property type="project" value="GO_Central"/>
</dbReference>
<dbReference type="GO" id="GO:0071111">
    <property type="term" value="F:cyclic-guanylate-specific phosphodiesterase activity"/>
    <property type="evidence" value="ECO:0000314"/>
    <property type="project" value="EcoCyc"/>
</dbReference>
<dbReference type="GO" id="GO:0000166">
    <property type="term" value="F:nucleotide binding"/>
    <property type="evidence" value="ECO:0007669"/>
    <property type="project" value="UniProtKB-KW"/>
</dbReference>
<dbReference type="GO" id="GO:1902021">
    <property type="term" value="P:regulation of bacterial-type flagellum-dependent cell motility"/>
    <property type="evidence" value="ECO:0000315"/>
    <property type="project" value="EcoCyc"/>
</dbReference>
<dbReference type="GO" id="GO:1900190">
    <property type="term" value="P:regulation of single-species biofilm formation"/>
    <property type="evidence" value="ECO:0000318"/>
    <property type="project" value="GO_Central"/>
</dbReference>
<dbReference type="CDD" id="cd01948">
    <property type="entry name" value="EAL"/>
    <property type="match status" value="1"/>
</dbReference>
<dbReference type="FunFam" id="3.20.20.450:FF:000002">
    <property type="entry name" value="Cyclic di-GMP phosphodiesterase YhjH"/>
    <property type="match status" value="1"/>
</dbReference>
<dbReference type="Gene3D" id="3.20.20.450">
    <property type="entry name" value="EAL domain"/>
    <property type="match status" value="1"/>
</dbReference>
<dbReference type="InterPro" id="IPR050706">
    <property type="entry name" value="Cyclic-di-GMP_PDE-like"/>
</dbReference>
<dbReference type="InterPro" id="IPR001633">
    <property type="entry name" value="EAL_dom"/>
</dbReference>
<dbReference type="InterPro" id="IPR035919">
    <property type="entry name" value="EAL_sf"/>
</dbReference>
<dbReference type="NCBIfam" id="NF008617">
    <property type="entry name" value="PRK11596.1"/>
    <property type="match status" value="1"/>
</dbReference>
<dbReference type="PANTHER" id="PTHR33121">
    <property type="entry name" value="CYCLIC DI-GMP PHOSPHODIESTERASE PDEF"/>
    <property type="match status" value="1"/>
</dbReference>
<dbReference type="PANTHER" id="PTHR33121:SF78">
    <property type="entry name" value="CYCLIC DI-GMP PHOSPHODIESTERASE PDEH"/>
    <property type="match status" value="1"/>
</dbReference>
<dbReference type="Pfam" id="PF00563">
    <property type="entry name" value="EAL"/>
    <property type="match status" value="1"/>
</dbReference>
<dbReference type="SMART" id="SM00052">
    <property type="entry name" value="EAL"/>
    <property type="match status" value="1"/>
</dbReference>
<dbReference type="SUPFAM" id="SSF141868">
    <property type="entry name" value="EAL domain-like"/>
    <property type="match status" value="1"/>
</dbReference>
<dbReference type="PROSITE" id="PS50883">
    <property type="entry name" value="EAL"/>
    <property type="match status" value="1"/>
</dbReference>
<gene>
    <name evidence="8" type="primary">pdeH</name>
    <name type="synonym">yhjH</name>
    <name type="ordered locus">b3525</name>
    <name type="ordered locus">JW3493</name>
</gene>
<organism>
    <name type="scientific">Escherichia coli (strain K12)</name>
    <dbReference type="NCBI Taxonomy" id="83333"/>
    <lineage>
        <taxon>Bacteria</taxon>
        <taxon>Pseudomonadati</taxon>
        <taxon>Pseudomonadota</taxon>
        <taxon>Gammaproteobacteria</taxon>
        <taxon>Enterobacterales</taxon>
        <taxon>Enterobacteriaceae</taxon>
        <taxon>Escherichia</taxon>
    </lineage>
</organism>
<proteinExistence type="evidence at protein level"/>
<feature type="chain" id="PRO_0000169573" description="Cyclic di-GMP phosphodiesterase PdeH">
    <location>
        <begin position="1"/>
        <end position="255"/>
    </location>
</feature>
<feature type="domain" description="EAL" evidence="1">
    <location>
        <begin position="13"/>
        <end position="255"/>
    </location>
</feature>
<feature type="mutagenesis site" description="Loss of c-di-GMP phosphodiesterase activity." evidence="3">
    <original>E</original>
    <variation>A</variation>
    <location>
        <position position="48"/>
    </location>
</feature>
<comment type="function">
    <text evidence="3 7">Involved in the control of the switch from cell motility to adhesion via regulation of cellular levels of cyclic-di-GMP (c-di-GMP) (PubMed:18765794). Part of a signaling cascade that regulates curli biosynthesis. The cascade is composed of two c-di-GMP control modules, in which c-di-GMP controlled by the DgcE/PdeH pair (module I) regulates the activity of the DgcM/PdeR pair (module II), which in turn regulates activity of the transcription factor MlrA and expression of the master biofilm regulator csgD (PubMed:23708798). Effect on flagella is controlled via the c-di-GMP-binding flagellar brake protein YcgR (PubMed:18765794).</text>
</comment>
<comment type="catalytic activity">
    <reaction evidence="3">
        <text>3',3'-c-di-GMP + H2O = 5'-phosphoguanylyl(3'-&gt;5')guanosine + H(+)</text>
        <dbReference type="Rhea" id="RHEA:24902"/>
        <dbReference type="ChEBI" id="CHEBI:15377"/>
        <dbReference type="ChEBI" id="CHEBI:15378"/>
        <dbReference type="ChEBI" id="CHEBI:58754"/>
        <dbReference type="ChEBI" id="CHEBI:58805"/>
        <dbReference type="EC" id="3.1.4.52"/>
    </reaction>
</comment>
<comment type="induction">
    <text evidence="2 3 4">A class 3 flagellar gene, it is dependent on the master transcriptional regulators FlhC and FlhD, and then FliA for expression. Induced in early post-exponential phase at both 28 and 37 degrees Celsius, it shuts down later than class 1 and class 2 operon genes. Expression has to be shut down for adhesive curli fimbriae to be induced, i.e. on solid medium where biofilms form. Repressed by RpoS.</text>
</comment>
<comment type="disruption phenotype">
    <text evidence="3 4 5 6">Disruption leads to increased expression of adhesive curli fimbriae genes (PubMed:18765794), including CsgD (PubMed:19332833). Also leads to a severe reduction in swarm size and swimming velocity, and 80% reduced concentrations of c-di-GMP. Disruption of ycgR, or concomitant disruption of dosC, dgcE, dgcQ and dgcN completely restores motility, suggesting these 4 genes, together with this c-di-GMP phosphodiesterase, form a network that regulates cell motility by altering levels of c-di-GMP (PubMed:20303158). Overlapping but different results were seen by another group, where disruption of dgcJ, another probable diguanylate cyclase, partially suppresses the pdeH disruption, full suppression requires concomitant disruption of dgcJ, dgcQ and dgcE (PubMed:18765794).</text>
</comment>
<comment type="sequence caution" evidence="9">
    <conflict type="frameshift">
        <sequence resource="EMBL-CDS" id="AAB18502"/>
    </conflict>
</comment>
<accession>P37646</accession>
<accession>Q2M7I7</accession>
<keyword id="KW-0973">c-di-GMP</keyword>
<keyword id="KW-0378">Hydrolase</keyword>
<keyword id="KW-0547">Nucleotide-binding</keyword>
<keyword id="KW-1185">Reference proteome</keyword>
<evidence type="ECO:0000255" key="1">
    <source>
        <dbReference type="PROSITE-ProRule" id="PRU00074"/>
    </source>
</evidence>
<evidence type="ECO:0000269" key="2">
    <source>
    </source>
</evidence>
<evidence type="ECO:0000269" key="3">
    <source>
    </source>
</evidence>
<evidence type="ECO:0000269" key="4">
    <source>
    </source>
</evidence>
<evidence type="ECO:0000269" key="5">
    <source>
    </source>
</evidence>
<evidence type="ECO:0000269" key="6">
    <source>
    </source>
</evidence>
<evidence type="ECO:0000269" key="7">
    <source>
    </source>
</evidence>
<evidence type="ECO:0000303" key="8">
    <source>
    </source>
</evidence>
<evidence type="ECO:0000305" key="9"/>
<sequence>MIRQVIQRISNPEASIESLQERRFWLQCERAYTWQPIYQTCGRLMAVELLTVVTHPLNPSQRLPPDRYFTEITVSHRMEVVKEQIDLLAQKADFFIEHGLLASVNIDGPTLIALRQQPKILRQIERLPWLRFELVEHIRLPKDSTFASMCEFGPLWLDDFGTGMANFSALSEVRYDYIKIARELFVMLRQSPEGRTLFSQLLHLMNRYCRGVIVEGVETPEEWRDVQNSPAFAAQGWFLSRPAPIETLNTAVLAL</sequence>
<reference key="1">
    <citation type="journal article" date="1994" name="Nucleic Acids Res.">
        <title>Analysis of the Escherichia coli genome. V. DNA sequence of the region from 76.0 to 81.5 minutes.</title>
        <authorList>
            <person name="Sofia H.J."/>
            <person name="Burland V."/>
            <person name="Daniels D.L."/>
            <person name="Plunkett G. III"/>
            <person name="Blattner F.R."/>
        </authorList>
    </citation>
    <scope>NUCLEOTIDE SEQUENCE [LARGE SCALE GENOMIC DNA]</scope>
    <source>
        <strain>K12 / MG1655 / ATCC 47076</strain>
    </source>
</reference>
<reference key="2">
    <citation type="journal article" date="1997" name="Science">
        <title>The complete genome sequence of Escherichia coli K-12.</title>
        <authorList>
            <person name="Blattner F.R."/>
            <person name="Plunkett G. III"/>
            <person name="Bloch C.A."/>
            <person name="Perna N.T."/>
            <person name="Burland V."/>
            <person name="Riley M."/>
            <person name="Collado-Vides J."/>
            <person name="Glasner J.D."/>
            <person name="Rode C.K."/>
            <person name="Mayhew G.F."/>
            <person name="Gregor J."/>
            <person name="Davis N.W."/>
            <person name="Kirkpatrick H.A."/>
            <person name="Goeden M.A."/>
            <person name="Rose D.J."/>
            <person name="Mau B."/>
            <person name="Shao Y."/>
        </authorList>
    </citation>
    <scope>SEQUENCE REVISION</scope>
    <source>
        <strain>K12 / MG1655 / ATCC 47076</strain>
    </source>
</reference>
<reference key="3">
    <citation type="journal article" date="2006" name="Mol. Syst. Biol.">
        <title>Highly accurate genome sequences of Escherichia coli K-12 strains MG1655 and W3110.</title>
        <authorList>
            <person name="Hayashi K."/>
            <person name="Morooka N."/>
            <person name="Yamamoto Y."/>
            <person name="Fujita K."/>
            <person name="Isono K."/>
            <person name="Choi S."/>
            <person name="Ohtsubo E."/>
            <person name="Baba T."/>
            <person name="Wanner B.L."/>
            <person name="Mori H."/>
            <person name="Horiuchi T."/>
        </authorList>
    </citation>
    <scope>NUCLEOTIDE SEQUENCE [LARGE SCALE GENOMIC DNA]</scope>
    <source>
        <strain>K12 / W3110 / ATCC 27325 / DSM 5911</strain>
    </source>
</reference>
<reference key="4">
    <citation type="journal article" date="2000" name="J. Mol. Biol.">
        <title>Two novel flagellar components and H-NS are involved in the motor function of Escherichia coli.</title>
        <authorList>
            <person name="Ko M."/>
            <person name="Park C."/>
        </authorList>
    </citation>
    <scope>INDUCTION</scope>
    <scope>MEMBER OF THE FLAGELLAR REGULON</scope>
    <source>
        <strain>K12</strain>
    </source>
</reference>
<reference key="5">
    <citation type="journal article" date="2008" name="Genes Dev.">
        <title>Inverse regulatory coordination of motility and curli-mediated adhesion in Escherichia coli.</title>
        <authorList>
            <person name="Pesavento C."/>
            <person name="Becker G."/>
            <person name="Sommerfeldt N."/>
            <person name="Possling A."/>
            <person name="Tschowri N."/>
            <person name="Mehlis A."/>
            <person name="Hengge R."/>
        </authorList>
    </citation>
    <scope>FUNCTION</scope>
    <scope>CATALYTIC ACTIVITY</scope>
    <scope>MUTAGENESIS OF GLU-48</scope>
    <scope>INDUCTION</scope>
    <scope>DISRUPTION PHENOTYPE</scope>
    <source>
        <strain>K12 / W3110 / ATCC 27325 / DSM 5911</strain>
    </source>
</reference>
<reference key="6">
    <citation type="journal article" date="2009" name="Genes Dev.">
        <title>The BLUF-EAL protein YcgF acts as a direct anti-repressor in a blue-light response of Escherichia coli.</title>
        <authorList>
            <person name="Tschowri N."/>
            <person name="Busse S."/>
            <person name="Hengge R."/>
        </authorList>
    </citation>
    <scope>C-DI-GMP-BINDING</scope>
    <source>
        <strain>K12 / MC4100</strain>
    </source>
</reference>
<reference key="7">
    <citation type="journal article" date="2009" name="Microbiology">
        <title>Gene expression patterns and differential input into curli fimbriae regulation of all GGDEF/EAL domain proteins in Escherichia coli.</title>
        <authorList>
            <person name="Sommerfeldt N."/>
            <person name="Possling A."/>
            <person name="Becker G."/>
            <person name="Pesavento C."/>
            <person name="Tschowri N."/>
            <person name="Hengge R."/>
        </authorList>
    </citation>
    <scope>INDUCTION</scope>
    <scope>RPOS-REPRESSION</scope>
    <scope>DISRUPTION PHENOTYPE</scope>
    <source>
        <strain>K12 / W3110 / ATCC 27325 / DSM 5911</strain>
    </source>
</reference>
<reference key="8">
    <citation type="journal article" date="2010" name="Cell">
        <title>Second messenger-mediated adjustment of bacterial swimming velocity.</title>
        <authorList>
            <person name="Boehm A."/>
            <person name="Kaiser M."/>
            <person name="Li H."/>
            <person name="Spangler C."/>
            <person name="Kasper C.A."/>
            <person name="Ackermann M."/>
            <person name="Kaever V."/>
            <person name="Sourjik V."/>
            <person name="Roth V."/>
            <person name="Jenal U."/>
        </authorList>
    </citation>
    <scope>DISRUPTION PHENOTYPE</scope>
    <source>
        <strain>K12 / MG1655 / ATCC 47076</strain>
    </source>
</reference>
<reference key="9">
    <citation type="journal article" date="2010" name="Mol. Cell">
        <title>The c-di-GMP binding protein YcgR controls flagellar motor direction and speed to affect chemotaxis by a 'backstop brake' mechanism.</title>
        <authorList>
            <person name="Paul K."/>
            <person name="Nieto V."/>
            <person name="Carlquist W.C."/>
            <person name="Blair D.F."/>
            <person name="Harshey R.M."/>
        </authorList>
    </citation>
    <scope>DISRUPTION PHENOTYPE</scope>
    <source>
        <strain>K12 / RP3098</strain>
    </source>
</reference>
<reference key="10">
    <citation type="journal article" date="2013" name="EMBO J.">
        <title>The EAL domain protein YciR acts as a trigger enzyme in a c-di-GMP signalling cascade in E. coli biofilm control.</title>
        <authorList>
            <person name="Lindenberg S."/>
            <person name="Klauck G."/>
            <person name="Pesavento C."/>
            <person name="Klauck E."/>
            <person name="Hengge R."/>
        </authorList>
    </citation>
    <scope>FUNCTION</scope>
</reference>
<reference key="11">
    <citation type="journal article" date="2015" name="J. Bacteriol.">
        <title>Systematic nomenclature for GGDEF and EAL domain-containing cyclic di-GMP turnover proteins of Escherichia coli.</title>
        <authorList>
            <person name="Hengge R."/>
            <person name="Galperin M.Y."/>
            <person name="Ghigo J.M."/>
            <person name="Gomelsky M."/>
            <person name="Green J."/>
            <person name="Hughes K.T."/>
            <person name="Jenal U."/>
            <person name="Landini P."/>
        </authorList>
    </citation>
    <scope>NOMENCLATURE</scope>
</reference>
<name>PDEH_ECOLI</name>
<protein>
    <recommendedName>
        <fullName evidence="9">Cyclic di-GMP phosphodiesterase PdeH</fullName>
        <ecNumber evidence="3">3.1.4.52</ecNumber>
    </recommendedName>
</protein>